<accession>Q2YNK7</accession>
<protein>
    <recommendedName>
        <fullName evidence="1">Nicotinate-nucleotide--dimethylbenzimidazole phosphoribosyltransferase</fullName>
        <shortName evidence="1">NN:DBI PRT</shortName>
        <ecNumber evidence="1">2.4.2.21</ecNumber>
    </recommendedName>
    <alternativeName>
        <fullName evidence="1">N(1)-alpha-phosphoribosyltransferase</fullName>
    </alternativeName>
</protein>
<feature type="chain" id="PRO_1000021580" description="Nicotinate-nucleotide--dimethylbenzimidazole phosphoribosyltransferase">
    <location>
        <begin position="1"/>
        <end position="339"/>
    </location>
</feature>
<feature type="active site" description="Proton acceptor" evidence="1">
    <location>
        <position position="306"/>
    </location>
</feature>
<proteinExistence type="inferred from homology"/>
<keyword id="KW-0169">Cobalamin biosynthesis</keyword>
<keyword id="KW-0328">Glycosyltransferase</keyword>
<keyword id="KW-1185">Reference proteome</keyword>
<keyword id="KW-0808">Transferase</keyword>
<comment type="function">
    <text evidence="1">Catalyzes the synthesis of alpha-ribazole-5'-phosphate from nicotinate mononucleotide (NAMN) and 5,6-dimethylbenzimidazole (DMB).</text>
</comment>
<comment type="catalytic activity">
    <reaction evidence="1">
        <text>5,6-dimethylbenzimidazole + nicotinate beta-D-ribonucleotide = alpha-ribazole 5'-phosphate + nicotinate + H(+)</text>
        <dbReference type="Rhea" id="RHEA:11196"/>
        <dbReference type="ChEBI" id="CHEBI:15378"/>
        <dbReference type="ChEBI" id="CHEBI:15890"/>
        <dbReference type="ChEBI" id="CHEBI:32544"/>
        <dbReference type="ChEBI" id="CHEBI:57502"/>
        <dbReference type="ChEBI" id="CHEBI:57918"/>
        <dbReference type="EC" id="2.4.2.21"/>
    </reaction>
</comment>
<comment type="pathway">
    <text evidence="1">Nucleoside biosynthesis; alpha-ribazole biosynthesis; alpha-ribazole from 5,6-dimethylbenzimidazole: step 1/2.</text>
</comment>
<comment type="similarity">
    <text evidence="1">Belongs to the CobT family.</text>
</comment>
<gene>
    <name evidence="1" type="primary">cobT</name>
    <name type="ordered locus">BAB1_0886</name>
</gene>
<reference key="1">
    <citation type="journal article" date="2005" name="Infect. Immun.">
        <title>Whole-genome analyses of speciation events in pathogenic Brucellae.</title>
        <authorList>
            <person name="Chain P.S."/>
            <person name="Comerci D.J."/>
            <person name="Tolmasky M.E."/>
            <person name="Larimer F.W."/>
            <person name="Malfatti S.A."/>
            <person name="Vergez L.M."/>
            <person name="Aguero F."/>
            <person name="Land M.L."/>
            <person name="Ugalde R.A."/>
            <person name="Garcia E."/>
        </authorList>
    </citation>
    <scope>NUCLEOTIDE SEQUENCE [LARGE SCALE GENOMIC DNA]</scope>
    <source>
        <strain>2308</strain>
    </source>
</reference>
<organism>
    <name type="scientific">Brucella abortus (strain 2308)</name>
    <dbReference type="NCBI Taxonomy" id="359391"/>
    <lineage>
        <taxon>Bacteria</taxon>
        <taxon>Pseudomonadati</taxon>
        <taxon>Pseudomonadota</taxon>
        <taxon>Alphaproteobacteria</taxon>
        <taxon>Hyphomicrobiales</taxon>
        <taxon>Brucellaceae</taxon>
        <taxon>Brucella/Ochrobactrum group</taxon>
        <taxon>Brucella</taxon>
    </lineage>
</organism>
<sequence length="339" mass="35117">MSASGLPFDDFRELIRNLPGPDLGAERAVREREVTLTKPAGSLGRLEEIVAWLATWTGKRTPQVNRPLVAVFAGNHGVTAKNITPFPPSVTAQMVENFAAGGAAINQICIANDLGLKVFDLALEHPTGDITEEAAMDEHTCAATMAFGMEAIAGGTDLLCIGEMGIGNTTIAAAIALALFGGTAEDWVGPGTGSTGELMQRKLAAVRQAVALHQPHLQDPLEVLRCLGGREIAAMAGAILAARMEKIPVIVDGFVASAAAAVLYAANPEAIDHCMFGHVSAEPGHRKLLAKMGKEPLLDLGMRLGEGTGAALAANIVKAAALCHSGMATFEQAGVSASK</sequence>
<evidence type="ECO:0000255" key="1">
    <source>
        <dbReference type="HAMAP-Rule" id="MF_00230"/>
    </source>
</evidence>
<dbReference type="EC" id="2.4.2.21" evidence="1"/>
<dbReference type="EMBL" id="AM040264">
    <property type="protein sequence ID" value="CAJ10842.1"/>
    <property type="molecule type" value="Genomic_DNA"/>
</dbReference>
<dbReference type="RefSeq" id="WP_002963997.1">
    <property type="nucleotide sequence ID" value="NZ_KN046823.1"/>
</dbReference>
<dbReference type="SMR" id="Q2YNK7"/>
<dbReference type="STRING" id="359391.BAB1_0886"/>
<dbReference type="GeneID" id="93016754"/>
<dbReference type="KEGG" id="bmf:BAB1_0886"/>
<dbReference type="PATRIC" id="fig|359391.11.peg.3195"/>
<dbReference type="HOGENOM" id="CLU_002982_0_1_5"/>
<dbReference type="PhylomeDB" id="Q2YNK7"/>
<dbReference type="UniPathway" id="UPA00061">
    <property type="reaction ID" value="UER00516"/>
</dbReference>
<dbReference type="Proteomes" id="UP000002719">
    <property type="component" value="Chromosome I"/>
</dbReference>
<dbReference type="GO" id="GO:0008939">
    <property type="term" value="F:nicotinate-nucleotide-dimethylbenzimidazole phosphoribosyltransferase activity"/>
    <property type="evidence" value="ECO:0007669"/>
    <property type="project" value="UniProtKB-UniRule"/>
</dbReference>
<dbReference type="GO" id="GO:0009236">
    <property type="term" value="P:cobalamin biosynthetic process"/>
    <property type="evidence" value="ECO:0007669"/>
    <property type="project" value="UniProtKB-KW"/>
</dbReference>
<dbReference type="CDD" id="cd02439">
    <property type="entry name" value="DMB-PRT_CobT"/>
    <property type="match status" value="1"/>
</dbReference>
<dbReference type="Gene3D" id="1.10.1610.10">
    <property type="match status" value="1"/>
</dbReference>
<dbReference type="Gene3D" id="3.40.50.10210">
    <property type="match status" value="1"/>
</dbReference>
<dbReference type="HAMAP" id="MF_00230">
    <property type="entry name" value="CobT"/>
    <property type="match status" value="1"/>
</dbReference>
<dbReference type="InterPro" id="IPR003200">
    <property type="entry name" value="Nict_dMeBzImd_PRibTrfase"/>
</dbReference>
<dbReference type="InterPro" id="IPR017846">
    <property type="entry name" value="Nict_dMeBzImd_PRibTrfase_bact"/>
</dbReference>
<dbReference type="InterPro" id="IPR023195">
    <property type="entry name" value="Nict_dMeBzImd_PRibTrfase_N"/>
</dbReference>
<dbReference type="InterPro" id="IPR036087">
    <property type="entry name" value="Nict_dMeBzImd_PRibTrfase_sf"/>
</dbReference>
<dbReference type="NCBIfam" id="TIGR03160">
    <property type="entry name" value="cobT_DBIPRT"/>
    <property type="match status" value="1"/>
</dbReference>
<dbReference type="NCBIfam" id="NF000996">
    <property type="entry name" value="PRK00105.1"/>
    <property type="match status" value="1"/>
</dbReference>
<dbReference type="PANTHER" id="PTHR43463">
    <property type="entry name" value="NICOTINATE-NUCLEOTIDE--DIMETHYLBENZIMIDAZOLE PHOSPHORIBOSYLTRANSFERASE"/>
    <property type="match status" value="1"/>
</dbReference>
<dbReference type="PANTHER" id="PTHR43463:SF1">
    <property type="entry name" value="NICOTINATE-NUCLEOTIDE--DIMETHYLBENZIMIDAZOLE PHOSPHORIBOSYLTRANSFERASE"/>
    <property type="match status" value="1"/>
</dbReference>
<dbReference type="Pfam" id="PF02277">
    <property type="entry name" value="DBI_PRT"/>
    <property type="match status" value="1"/>
</dbReference>
<dbReference type="SUPFAM" id="SSF52733">
    <property type="entry name" value="Nicotinate mononucleotide:5,6-dimethylbenzimidazole phosphoribosyltransferase (CobT)"/>
    <property type="match status" value="1"/>
</dbReference>
<name>COBT_BRUA2</name>